<comment type="function">
    <text evidence="1">Voltage-dependent rectifying anion channel that facilitates the translocation between chloroplast and cytoplasm of phosphorylated carbohydrates such as triosephosphate, 3-phosphoglycerate and inorganic phosphate (Pi) depending of ATP to triosephosphate ratio in the plastidial intermembrane space; in high triosephosphate/ATP conditions (e.g. photosynthesis), export of triosphosphate from chloroplast (outward rectifying channels), but in high ATP/triosephosphate conditions (e.g. dark phase), import of phosphosolutes (inward rectifying channels) (By similarity).</text>
</comment>
<comment type="subcellular location">
    <subcellularLocation>
        <location evidence="1">Plastid</location>
        <location evidence="1">Etioplast membrane</location>
        <topology evidence="1">Multi-pass membrane protein</topology>
    </subcellularLocation>
    <subcellularLocation>
        <location evidence="1">Plastid</location>
        <location evidence="1">Chloroplast outer membrane</location>
        <topology evidence="1">Multi-pass membrane protein</topology>
    </subcellularLocation>
    <text evidence="1">Present in non-green root plastids.</text>
</comment>
<comment type="similarity">
    <text evidence="4">Belongs to the plastid outer envelope porin OEP21 (TC 1.B.29) family.</text>
</comment>
<reference key="1">
    <citation type="journal article" date="2005" name="Nature">
        <title>The map-based sequence of the rice genome.</title>
        <authorList>
            <consortium name="International rice genome sequencing project (IRGSP)"/>
        </authorList>
    </citation>
    <scope>NUCLEOTIDE SEQUENCE [LARGE SCALE GENOMIC DNA]</scope>
    <source>
        <strain>cv. Nipponbare</strain>
    </source>
</reference>
<reference key="2">
    <citation type="journal article" date="2008" name="Nucleic Acids Res.">
        <title>The rice annotation project database (RAP-DB): 2008 update.</title>
        <authorList>
            <consortium name="The rice annotation project (RAP)"/>
        </authorList>
    </citation>
    <scope>GENOME REANNOTATION</scope>
    <source>
        <strain>cv. Nipponbare</strain>
    </source>
</reference>
<reference key="3">
    <citation type="journal article" date="2013" name="Rice">
        <title>Improvement of the Oryza sativa Nipponbare reference genome using next generation sequence and optical map data.</title>
        <authorList>
            <person name="Kawahara Y."/>
            <person name="de la Bastide M."/>
            <person name="Hamilton J.P."/>
            <person name="Kanamori H."/>
            <person name="McCombie W.R."/>
            <person name="Ouyang S."/>
            <person name="Schwartz D.C."/>
            <person name="Tanaka T."/>
            <person name="Wu J."/>
            <person name="Zhou S."/>
            <person name="Childs K.L."/>
            <person name="Davidson R.M."/>
            <person name="Lin H."/>
            <person name="Quesada-Ocampo L."/>
            <person name="Vaillancourt B."/>
            <person name="Sakai H."/>
            <person name="Lee S.S."/>
            <person name="Kim J."/>
            <person name="Numa H."/>
            <person name="Itoh T."/>
            <person name="Buell C.R."/>
            <person name="Matsumoto T."/>
        </authorList>
    </citation>
    <scope>GENOME REANNOTATION</scope>
    <source>
        <strain>cv. Nipponbare</strain>
    </source>
</reference>
<reference key="4">
    <citation type="journal article" date="2005" name="PLoS Biol.">
        <title>The genomes of Oryza sativa: a history of duplications.</title>
        <authorList>
            <person name="Yu J."/>
            <person name="Wang J."/>
            <person name="Lin W."/>
            <person name="Li S."/>
            <person name="Li H."/>
            <person name="Zhou J."/>
            <person name="Ni P."/>
            <person name="Dong W."/>
            <person name="Hu S."/>
            <person name="Zeng C."/>
            <person name="Zhang J."/>
            <person name="Zhang Y."/>
            <person name="Li R."/>
            <person name="Xu Z."/>
            <person name="Li S."/>
            <person name="Li X."/>
            <person name="Zheng H."/>
            <person name="Cong L."/>
            <person name="Lin L."/>
            <person name="Yin J."/>
            <person name="Geng J."/>
            <person name="Li G."/>
            <person name="Shi J."/>
            <person name="Liu J."/>
            <person name="Lv H."/>
            <person name="Li J."/>
            <person name="Wang J."/>
            <person name="Deng Y."/>
            <person name="Ran L."/>
            <person name="Shi X."/>
            <person name="Wang X."/>
            <person name="Wu Q."/>
            <person name="Li C."/>
            <person name="Ren X."/>
            <person name="Wang J."/>
            <person name="Wang X."/>
            <person name="Li D."/>
            <person name="Liu D."/>
            <person name="Zhang X."/>
            <person name="Ji Z."/>
            <person name="Zhao W."/>
            <person name="Sun Y."/>
            <person name="Zhang Z."/>
            <person name="Bao J."/>
            <person name="Han Y."/>
            <person name="Dong L."/>
            <person name="Ji J."/>
            <person name="Chen P."/>
            <person name="Wu S."/>
            <person name="Liu J."/>
            <person name="Xiao Y."/>
            <person name="Bu D."/>
            <person name="Tan J."/>
            <person name="Yang L."/>
            <person name="Ye C."/>
            <person name="Zhang J."/>
            <person name="Xu J."/>
            <person name="Zhou Y."/>
            <person name="Yu Y."/>
            <person name="Zhang B."/>
            <person name="Zhuang S."/>
            <person name="Wei H."/>
            <person name="Liu B."/>
            <person name="Lei M."/>
            <person name="Yu H."/>
            <person name="Li Y."/>
            <person name="Xu H."/>
            <person name="Wei S."/>
            <person name="He X."/>
            <person name="Fang L."/>
            <person name="Zhang Z."/>
            <person name="Zhang Y."/>
            <person name="Huang X."/>
            <person name="Su Z."/>
            <person name="Tong W."/>
            <person name="Li J."/>
            <person name="Tong Z."/>
            <person name="Li S."/>
            <person name="Ye J."/>
            <person name="Wang L."/>
            <person name="Fang L."/>
            <person name="Lei T."/>
            <person name="Chen C.-S."/>
            <person name="Chen H.-C."/>
            <person name="Xu Z."/>
            <person name="Li H."/>
            <person name="Huang H."/>
            <person name="Zhang F."/>
            <person name="Xu H."/>
            <person name="Li N."/>
            <person name="Zhao C."/>
            <person name="Li S."/>
            <person name="Dong L."/>
            <person name="Huang Y."/>
            <person name="Li L."/>
            <person name="Xi Y."/>
            <person name="Qi Q."/>
            <person name="Li W."/>
            <person name="Zhang B."/>
            <person name="Hu W."/>
            <person name="Zhang Y."/>
            <person name="Tian X."/>
            <person name="Jiao Y."/>
            <person name="Liang X."/>
            <person name="Jin J."/>
            <person name="Gao L."/>
            <person name="Zheng W."/>
            <person name="Hao B."/>
            <person name="Liu S.-M."/>
            <person name="Wang W."/>
            <person name="Yuan L."/>
            <person name="Cao M."/>
            <person name="McDermott J."/>
            <person name="Samudrala R."/>
            <person name="Wang J."/>
            <person name="Wong G.K.-S."/>
            <person name="Yang H."/>
        </authorList>
    </citation>
    <scope>NUCLEOTIDE SEQUENCE [LARGE SCALE GENOMIC DNA]</scope>
    <source>
        <strain>cv. Nipponbare</strain>
    </source>
</reference>
<reference key="5">
    <citation type="journal article" date="2003" name="Science">
        <title>Collection, mapping, and annotation of over 28,000 cDNA clones from japonica rice.</title>
        <authorList>
            <consortium name="The rice full-length cDNA consortium"/>
        </authorList>
    </citation>
    <scope>NUCLEOTIDE SEQUENCE [LARGE SCALE MRNA]</scope>
    <source>
        <strain>cv. Nipponbare</strain>
    </source>
</reference>
<organism>
    <name type="scientific">Oryza sativa subsp. japonica</name>
    <name type="common">Rice</name>
    <dbReference type="NCBI Taxonomy" id="39947"/>
    <lineage>
        <taxon>Eukaryota</taxon>
        <taxon>Viridiplantae</taxon>
        <taxon>Streptophyta</taxon>
        <taxon>Embryophyta</taxon>
        <taxon>Tracheophyta</taxon>
        <taxon>Spermatophyta</taxon>
        <taxon>Magnoliopsida</taxon>
        <taxon>Liliopsida</taxon>
        <taxon>Poales</taxon>
        <taxon>Poaceae</taxon>
        <taxon>BOP clade</taxon>
        <taxon>Oryzoideae</taxon>
        <taxon>Oryzeae</taxon>
        <taxon>Oryzinae</taxon>
        <taxon>Oryza</taxon>
        <taxon>Oryza sativa</taxon>
    </lineage>
</organism>
<sequence>METSLRLRGGGSRPQSKSQEGLRIHAKEKLPIASNALLQAHGEIHAATGAPTYLALLFRNFYPRLSANLGLGLAIHFRNNQPLPLAWDNFSYTLRASKAIIPFPSNALLGINLKGRLLADKYFNPTARTAAVELAWTILDLKRGQDVRLKLGYQLLHKMPYFQLRENNWTFNAYMDGKWDVRFDL</sequence>
<proteinExistence type="evidence at transcript level"/>
<gene>
    <name type="primary">OEP21</name>
    <name type="ordered locus">Os02g0832200</name>
    <name type="ordered locus">LOC_Os02g58550</name>
    <name type="ORF">OJ1149_C12.21</name>
    <name type="ORF">OsJ_09004</name>
</gene>
<evidence type="ECO:0000250" key="1"/>
<evidence type="ECO:0000255" key="2"/>
<evidence type="ECO:0000256" key="3">
    <source>
        <dbReference type="SAM" id="MobiDB-lite"/>
    </source>
</evidence>
<evidence type="ECO:0000305" key="4"/>
<name>OEP21_ORYSJ</name>
<feature type="chain" id="PRO_0000415549" description="Outer envelope pore protein 21, chloroplastic">
    <location>
        <begin position="1"/>
        <end position="185"/>
    </location>
</feature>
<feature type="topological domain" description="Cytoplasmic" evidence="2">
    <location>
        <begin position="1"/>
        <end position="29"/>
    </location>
</feature>
<feature type="transmembrane region" description="Beta stranded; Name=1" evidence="2">
    <location>
        <begin position="30"/>
        <end position="39"/>
    </location>
</feature>
<feature type="topological domain" description="Chloroplast intermembrane" evidence="2">
    <location>
        <begin position="40"/>
        <end position="63"/>
    </location>
</feature>
<feature type="transmembrane region" description="Beta stranded; Name=2" evidence="2">
    <location>
        <begin position="64"/>
        <end position="73"/>
    </location>
</feature>
<feature type="topological domain" description="Cytoplasmic" evidence="2">
    <location>
        <begin position="74"/>
        <end position="88"/>
    </location>
</feature>
<feature type="transmembrane region" description="Beta stranded; Name=3" evidence="2">
    <location>
        <begin position="89"/>
        <end position="98"/>
    </location>
</feature>
<feature type="topological domain" description="Chloroplast intermembrane" evidence="2">
    <location>
        <begin position="99"/>
        <end position="105"/>
    </location>
</feature>
<feature type="transmembrane region" description="Beta stranded; Name=4" evidence="2">
    <location>
        <begin position="106"/>
        <end position="115"/>
    </location>
</feature>
<feature type="topological domain" description="Cytoplasmic" evidence="2">
    <location>
        <begin position="116"/>
        <end position="128"/>
    </location>
</feature>
<feature type="transmembrane region" description="Beta stranded; Name=5" evidence="2">
    <location>
        <begin position="129"/>
        <end position="138"/>
    </location>
</feature>
<feature type="topological domain" description="Chloroplast intermembrane" evidence="2">
    <location>
        <begin position="139"/>
        <end position="145"/>
    </location>
</feature>
<feature type="transmembrane region" description="Beta stranded; Name=6" evidence="2">
    <location>
        <begin position="146"/>
        <end position="155"/>
    </location>
</feature>
<feature type="topological domain" description="Cytoplasmic" evidence="2">
    <location>
        <begin position="156"/>
        <end position="160"/>
    </location>
</feature>
<feature type="transmembrane region" description="Beta stranded; Name=7" evidence="2">
    <location>
        <begin position="161"/>
        <end position="170"/>
    </location>
</feature>
<feature type="topological domain" description="Chloroplast intermembrane" evidence="2">
    <location>
        <begin position="171"/>
        <end position="176"/>
    </location>
</feature>
<feature type="transmembrane region" description="Beta stranded; Name=8" evidence="2">
    <location>
        <begin position="177"/>
        <end position="185"/>
    </location>
</feature>
<feature type="region of interest" description="Disordered" evidence="3">
    <location>
        <begin position="1"/>
        <end position="22"/>
    </location>
</feature>
<keyword id="KW-0150">Chloroplast</keyword>
<keyword id="KW-0406">Ion transport</keyword>
<keyword id="KW-0472">Membrane</keyword>
<keyword id="KW-0934">Plastid</keyword>
<keyword id="KW-1002">Plastid outer membrane</keyword>
<keyword id="KW-0626">Porin</keyword>
<keyword id="KW-1185">Reference proteome</keyword>
<keyword id="KW-0812">Transmembrane</keyword>
<keyword id="KW-1134">Transmembrane beta strand</keyword>
<keyword id="KW-0813">Transport</keyword>
<dbReference type="EMBL" id="AP004082">
    <property type="protein sequence ID" value="BAD23013.1"/>
    <property type="molecule type" value="Genomic_DNA"/>
</dbReference>
<dbReference type="EMBL" id="AP008208">
    <property type="protein sequence ID" value="BAF10540.1"/>
    <property type="molecule type" value="Genomic_DNA"/>
</dbReference>
<dbReference type="EMBL" id="AP014958">
    <property type="protein sequence ID" value="BAS81767.1"/>
    <property type="molecule type" value="Genomic_DNA"/>
</dbReference>
<dbReference type="EMBL" id="CM000139">
    <property type="protein sequence ID" value="EEE58115.1"/>
    <property type="molecule type" value="Genomic_DNA"/>
</dbReference>
<dbReference type="EMBL" id="AK108268">
    <property type="protein sequence ID" value="BAG98352.1"/>
    <property type="molecule type" value="mRNA"/>
</dbReference>
<dbReference type="RefSeq" id="XP_015624623.1">
    <property type="nucleotide sequence ID" value="XM_015769137.1"/>
</dbReference>
<dbReference type="RefSeq" id="XP_015624624.1">
    <property type="nucleotide sequence ID" value="XM_015769138.1"/>
</dbReference>
<dbReference type="SMR" id="Q6K965"/>
<dbReference type="FunCoup" id="Q6K965">
    <property type="interactions" value="1437"/>
</dbReference>
<dbReference type="STRING" id="39947.Q6K965"/>
<dbReference type="PaxDb" id="39947-Q6K965"/>
<dbReference type="EnsemblPlants" id="Os02t0832200-01">
    <property type="protein sequence ID" value="Os02t0832200-01"/>
    <property type="gene ID" value="Os02g0832200"/>
</dbReference>
<dbReference type="Gramene" id="Os02t0832200-01">
    <property type="protein sequence ID" value="Os02t0832200-01"/>
    <property type="gene ID" value="Os02g0832200"/>
</dbReference>
<dbReference type="KEGG" id="dosa:Os02g0832200"/>
<dbReference type="eggNOG" id="ENOG502RX9S">
    <property type="taxonomic scope" value="Eukaryota"/>
</dbReference>
<dbReference type="HOGENOM" id="CLU_104399_0_0_1"/>
<dbReference type="InParanoid" id="Q6K965"/>
<dbReference type="OMA" id="NADYKGR"/>
<dbReference type="OrthoDB" id="503907at2759"/>
<dbReference type="Proteomes" id="UP000000763">
    <property type="component" value="Chromosome 2"/>
</dbReference>
<dbReference type="Proteomes" id="UP000007752">
    <property type="component" value="Chromosome 2"/>
</dbReference>
<dbReference type="Proteomes" id="UP000059680">
    <property type="component" value="Chromosome 2"/>
</dbReference>
<dbReference type="GO" id="GO:0009707">
    <property type="term" value="C:chloroplast outer membrane"/>
    <property type="evidence" value="ECO:0000250"/>
    <property type="project" value="UniProtKB"/>
</dbReference>
<dbReference type="GO" id="GO:0034426">
    <property type="term" value="C:etioplast membrane"/>
    <property type="evidence" value="ECO:0000250"/>
    <property type="project" value="UniProtKB"/>
</dbReference>
<dbReference type="GO" id="GO:0046930">
    <property type="term" value="C:pore complex"/>
    <property type="evidence" value="ECO:0007669"/>
    <property type="project" value="UniProtKB-KW"/>
</dbReference>
<dbReference type="GO" id="GO:0015288">
    <property type="term" value="F:porin activity"/>
    <property type="evidence" value="ECO:0000250"/>
    <property type="project" value="UniProtKB"/>
</dbReference>
<dbReference type="GO" id="GO:0008308">
    <property type="term" value="F:voltage-gated monoatomic anion channel activity"/>
    <property type="evidence" value="ECO:0000250"/>
    <property type="project" value="UniProtKB"/>
</dbReference>
<dbReference type="GO" id="GO:0044070">
    <property type="term" value="P:regulation of monoatomic anion transport"/>
    <property type="evidence" value="ECO:0000250"/>
    <property type="project" value="UniProtKB"/>
</dbReference>
<dbReference type="InterPro" id="IPR034575">
    <property type="entry name" value="OEP21"/>
</dbReference>
<dbReference type="PANTHER" id="PTHR35993">
    <property type="entry name" value="OUTER ENVELOPE PORE PROTEIN 21B, CHLOROPLASTIC"/>
    <property type="match status" value="1"/>
</dbReference>
<dbReference type="PANTHER" id="PTHR35993:SF1">
    <property type="entry name" value="OUTER ENVELOPE PORE PROTEIN 21B, CHLOROPLASTIC"/>
    <property type="match status" value="1"/>
</dbReference>
<accession>Q6K965</accession>
<accession>A0A0P0VRP2</accession>
<protein>
    <recommendedName>
        <fullName>Outer envelope pore protein 21, chloroplastic</fullName>
    </recommendedName>
    <alternativeName>
        <fullName>Chloroplastic outer envelope pore protein of 21 kDa</fullName>
    </alternativeName>
</protein>